<feature type="chain" id="PRO_0000338434" description="Putative calcium-binding protein CML19">
    <location>
        <begin position="1"/>
        <end position="146"/>
    </location>
</feature>
<feature type="domain" description="EF-hand 1" evidence="2">
    <location>
        <begin position="3"/>
        <end position="38"/>
    </location>
</feature>
<feature type="domain" description="EF-hand 2" evidence="2">
    <location>
        <begin position="40"/>
        <end position="75"/>
    </location>
</feature>
<feature type="domain" description="EF-hand 3" evidence="2">
    <location>
        <begin position="79"/>
        <end position="114"/>
    </location>
</feature>
<feature type="domain" description="EF-hand 4" evidence="2">
    <location>
        <begin position="115"/>
        <end position="146"/>
    </location>
</feature>
<feature type="binding site" evidence="2">
    <location>
        <position position="16"/>
    </location>
    <ligand>
        <name>Ca(2+)</name>
        <dbReference type="ChEBI" id="CHEBI:29108"/>
        <label>1</label>
    </ligand>
</feature>
<feature type="binding site" evidence="2">
    <location>
        <position position="18"/>
    </location>
    <ligand>
        <name>Ca(2+)</name>
        <dbReference type="ChEBI" id="CHEBI:29108"/>
        <label>1</label>
    </ligand>
</feature>
<feature type="binding site" evidence="2">
    <location>
        <position position="20"/>
    </location>
    <ligand>
        <name>Ca(2+)</name>
        <dbReference type="ChEBI" id="CHEBI:29108"/>
        <label>1</label>
    </ligand>
</feature>
<feature type="binding site" evidence="2">
    <location>
        <position position="22"/>
    </location>
    <ligand>
        <name>Ca(2+)</name>
        <dbReference type="ChEBI" id="CHEBI:29108"/>
        <label>1</label>
    </ligand>
</feature>
<feature type="binding site" evidence="2">
    <location>
        <position position="27"/>
    </location>
    <ligand>
        <name>Ca(2+)</name>
        <dbReference type="ChEBI" id="CHEBI:29108"/>
        <label>1</label>
    </ligand>
</feature>
<feature type="binding site" evidence="2">
    <location>
        <position position="53"/>
    </location>
    <ligand>
        <name>Ca(2+)</name>
        <dbReference type="ChEBI" id="CHEBI:29108"/>
        <label>2</label>
    </ligand>
</feature>
<feature type="binding site" evidence="2">
    <location>
        <position position="55"/>
    </location>
    <ligand>
        <name>Ca(2+)</name>
        <dbReference type="ChEBI" id="CHEBI:29108"/>
        <label>2</label>
    </ligand>
</feature>
<feature type="binding site" evidence="2">
    <location>
        <position position="57"/>
    </location>
    <ligand>
        <name>Ca(2+)</name>
        <dbReference type="ChEBI" id="CHEBI:29108"/>
        <label>2</label>
    </ligand>
</feature>
<feature type="binding site" evidence="2">
    <location>
        <position position="64"/>
    </location>
    <ligand>
        <name>Ca(2+)</name>
        <dbReference type="ChEBI" id="CHEBI:29108"/>
        <label>2</label>
    </ligand>
</feature>
<feature type="binding site" evidence="2">
    <location>
        <position position="128"/>
    </location>
    <ligand>
        <name>Ca(2+)</name>
        <dbReference type="ChEBI" id="CHEBI:29108"/>
        <label>3</label>
    </ligand>
</feature>
<feature type="binding site" evidence="2">
    <location>
        <position position="130"/>
    </location>
    <ligand>
        <name>Ca(2+)</name>
        <dbReference type="ChEBI" id="CHEBI:29108"/>
        <label>3</label>
    </ligand>
</feature>
<feature type="binding site" evidence="2">
    <location>
        <position position="132"/>
    </location>
    <ligand>
        <name>Ca(2+)</name>
        <dbReference type="ChEBI" id="CHEBI:29108"/>
        <label>3</label>
    </ligand>
</feature>
<feature type="binding site" evidence="2">
    <location>
        <position position="139"/>
    </location>
    <ligand>
        <name>Ca(2+)</name>
        <dbReference type="ChEBI" id="CHEBI:29108"/>
        <label>3</label>
    </ligand>
</feature>
<name>CML19_ORYSJ</name>
<evidence type="ECO:0000250" key="1"/>
<evidence type="ECO:0000255" key="2">
    <source>
        <dbReference type="PROSITE-ProRule" id="PRU00448"/>
    </source>
</evidence>
<evidence type="ECO:0000305" key="3"/>
<dbReference type="EMBL" id="AP004368">
    <property type="protein sequence ID" value="BAB90783.1"/>
    <property type="molecule type" value="Genomic_DNA"/>
</dbReference>
<dbReference type="EMBL" id="AP014957">
    <property type="protein sequence ID" value="BAS76279.1"/>
    <property type="molecule type" value="Genomic_DNA"/>
</dbReference>
<dbReference type="EMBL" id="CM000138">
    <property type="protein sequence ID" value="EAZ14875.1"/>
    <property type="molecule type" value="Genomic_DNA"/>
</dbReference>
<dbReference type="SMR" id="Q8RYJ8"/>
<dbReference type="FunCoup" id="Q8RYJ8">
    <property type="interactions" value="186"/>
</dbReference>
<dbReference type="STRING" id="39947.Q8RYJ8"/>
<dbReference type="PaxDb" id="39947-Q8RYJ8"/>
<dbReference type="EnsemblPlants" id="Os01t0955500-00">
    <property type="protein sequence ID" value="Os01t0955500-00"/>
    <property type="gene ID" value="Os01g0955500"/>
</dbReference>
<dbReference type="GeneID" id="107277351"/>
<dbReference type="Gramene" id="Os01t0955500-00">
    <property type="protein sequence ID" value="Os01t0955500-00"/>
    <property type="gene ID" value="Os01g0955500"/>
</dbReference>
<dbReference type="KEGG" id="osa:107277351"/>
<dbReference type="eggNOG" id="KOG0027">
    <property type="taxonomic scope" value="Eukaryota"/>
</dbReference>
<dbReference type="HOGENOM" id="CLU_061288_20_6_1"/>
<dbReference type="InParanoid" id="Q8RYJ8"/>
<dbReference type="OMA" id="FNEFTIM"/>
<dbReference type="OrthoDB" id="26525at2759"/>
<dbReference type="Proteomes" id="UP000000763">
    <property type="component" value="Chromosome 1"/>
</dbReference>
<dbReference type="Proteomes" id="UP000007752">
    <property type="component" value="Chromosome 1"/>
</dbReference>
<dbReference type="Proteomes" id="UP000059680">
    <property type="component" value="Chromosome 1"/>
</dbReference>
<dbReference type="GO" id="GO:0005737">
    <property type="term" value="C:cytoplasm"/>
    <property type="evidence" value="ECO:0000318"/>
    <property type="project" value="GO_Central"/>
</dbReference>
<dbReference type="GO" id="GO:0005509">
    <property type="term" value="F:calcium ion binding"/>
    <property type="evidence" value="ECO:0000318"/>
    <property type="project" value="GO_Central"/>
</dbReference>
<dbReference type="GO" id="GO:0030234">
    <property type="term" value="F:enzyme regulator activity"/>
    <property type="evidence" value="ECO:0000318"/>
    <property type="project" value="GO_Central"/>
</dbReference>
<dbReference type="CDD" id="cd00051">
    <property type="entry name" value="EFh"/>
    <property type="match status" value="2"/>
</dbReference>
<dbReference type="FunFam" id="1.10.238.10:FF:000292">
    <property type="entry name" value="Calcium-binding protein CML38"/>
    <property type="match status" value="1"/>
</dbReference>
<dbReference type="FunFam" id="1.10.238.10:FF:000003">
    <property type="entry name" value="Calmodulin A"/>
    <property type="match status" value="1"/>
</dbReference>
<dbReference type="Gene3D" id="1.10.238.10">
    <property type="entry name" value="EF-hand"/>
    <property type="match status" value="2"/>
</dbReference>
<dbReference type="InterPro" id="IPR011992">
    <property type="entry name" value="EF-hand-dom_pair"/>
</dbReference>
<dbReference type="InterPro" id="IPR018247">
    <property type="entry name" value="EF_Hand_1_Ca_BS"/>
</dbReference>
<dbReference type="InterPro" id="IPR002048">
    <property type="entry name" value="EF_hand_dom"/>
</dbReference>
<dbReference type="InterPro" id="IPR039647">
    <property type="entry name" value="EF_hand_pair_protein_CML-like"/>
</dbReference>
<dbReference type="PANTHER" id="PTHR10891">
    <property type="entry name" value="EF-HAND CALCIUM-BINDING DOMAIN CONTAINING PROTEIN"/>
    <property type="match status" value="1"/>
</dbReference>
<dbReference type="Pfam" id="PF13499">
    <property type="entry name" value="EF-hand_7"/>
    <property type="match status" value="2"/>
</dbReference>
<dbReference type="SMART" id="SM00054">
    <property type="entry name" value="EFh"/>
    <property type="match status" value="4"/>
</dbReference>
<dbReference type="SUPFAM" id="SSF47473">
    <property type="entry name" value="EF-hand"/>
    <property type="match status" value="1"/>
</dbReference>
<dbReference type="PROSITE" id="PS00018">
    <property type="entry name" value="EF_HAND_1"/>
    <property type="match status" value="3"/>
</dbReference>
<dbReference type="PROSITE" id="PS50222">
    <property type="entry name" value="EF_HAND_2"/>
    <property type="match status" value="4"/>
</dbReference>
<sequence>MVAATAEFRRVFSAFDRDADGKISAAELRLCMKAALGEDMSAEEAEALVSSADTDDDGLLDEEEFTKLAVQLEMGDEEERCRGLMEAFRMYEMEGEGRITPASLKRMLSKLGSHQGIEECQTMICRFDLDGDGVISFEEFKIMMDA</sequence>
<proteinExistence type="inferred from homology"/>
<protein>
    <recommendedName>
        <fullName>Putative calcium-binding protein CML19</fullName>
    </recommendedName>
    <alternativeName>
        <fullName>Calmodulin-like protein 19</fullName>
    </alternativeName>
</protein>
<comment type="function">
    <text evidence="1">Potential calcium sensor.</text>
</comment>
<comment type="caution">
    <text evidence="3">Although assigned as a calmodulin family member by PubMed:17263873, it only contains EF-hand domains.</text>
</comment>
<gene>
    <name type="primary">CML19</name>
    <name type="ordered locus">Os01g0955500</name>
    <name type="ordered locus">LOC_Os01g72550</name>
    <name type="ORF">B1139B11.19</name>
    <name type="ORF">OsJ_004700</name>
</gene>
<keyword id="KW-0106">Calcium</keyword>
<keyword id="KW-0479">Metal-binding</keyword>
<keyword id="KW-1185">Reference proteome</keyword>
<keyword id="KW-0677">Repeat</keyword>
<accession>Q8RYJ8</accession>
<accession>A0A0P0VDA8</accession>
<organism>
    <name type="scientific">Oryza sativa subsp. japonica</name>
    <name type="common">Rice</name>
    <dbReference type="NCBI Taxonomy" id="39947"/>
    <lineage>
        <taxon>Eukaryota</taxon>
        <taxon>Viridiplantae</taxon>
        <taxon>Streptophyta</taxon>
        <taxon>Embryophyta</taxon>
        <taxon>Tracheophyta</taxon>
        <taxon>Spermatophyta</taxon>
        <taxon>Magnoliopsida</taxon>
        <taxon>Liliopsida</taxon>
        <taxon>Poales</taxon>
        <taxon>Poaceae</taxon>
        <taxon>BOP clade</taxon>
        <taxon>Oryzoideae</taxon>
        <taxon>Oryzeae</taxon>
        <taxon>Oryzinae</taxon>
        <taxon>Oryza</taxon>
        <taxon>Oryza sativa</taxon>
    </lineage>
</organism>
<reference key="1">
    <citation type="journal article" date="2002" name="Nature">
        <title>The genome sequence and structure of rice chromosome 1.</title>
        <authorList>
            <person name="Sasaki T."/>
            <person name="Matsumoto T."/>
            <person name="Yamamoto K."/>
            <person name="Sakata K."/>
            <person name="Baba T."/>
            <person name="Katayose Y."/>
            <person name="Wu J."/>
            <person name="Niimura Y."/>
            <person name="Cheng Z."/>
            <person name="Nagamura Y."/>
            <person name="Antonio B.A."/>
            <person name="Kanamori H."/>
            <person name="Hosokawa S."/>
            <person name="Masukawa M."/>
            <person name="Arikawa K."/>
            <person name="Chiden Y."/>
            <person name="Hayashi M."/>
            <person name="Okamoto M."/>
            <person name="Ando T."/>
            <person name="Aoki H."/>
            <person name="Arita K."/>
            <person name="Hamada M."/>
            <person name="Harada C."/>
            <person name="Hijishita S."/>
            <person name="Honda M."/>
            <person name="Ichikawa Y."/>
            <person name="Idonuma A."/>
            <person name="Iijima M."/>
            <person name="Ikeda M."/>
            <person name="Ikeno M."/>
            <person name="Ito S."/>
            <person name="Ito T."/>
            <person name="Ito Y."/>
            <person name="Ito Y."/>
            <person name="Iwabuchi A."/>
            <person name="Kamiya K."/>
            <person name="Karasawa W."/>
            <person name="Katagiri S."/>
            <person name="Kikuta A."/>
            <person name="Kobayashi N."/>
            <person name="Kono I."/>
            <person name="Machita K."/>
            <person name="Maehara T."/>
            <person name="Mizuno H."/>
            <person name="Mizubayashi T."/>
            <person name="Mukai Y."/>
            <person name="Nagasaki H."/>
            <person name="Nakashima M."/>
            <person name="Nakama Y."/>
            <person name="Nakamichi Y."/>
            <person name="Nakamura M."/>
            <person name="Namiki N."/>
            <person name="Negishi M."/>
            <person name="Ohta I."/>
            <person name="Ono N."/>
            <person name="Saji S."/>
            <person name="Sakai K."/>
            <person name="Shibata M."/>
            <person name="Shimokawa T."/>
            <person name="Shomura A."/>
            <person name="Song J."/>
            <person name="Takazaki Y."/>
            <person name="Terasawa K."/>
            <person name="Tsuji K."/>
            <person name="Waki K."/>
            <person name="Yamagata H."/>
            <person name="Yamane H."/>
            <person name="Yoshiki S."/>
            <person name="Yoshihara R."/>
            <person name="Yukawa K."/>
            <person name="Zhong H."/>
            <person name="Iwama H."/>
            <person name="Endo T."/>
            <person name="Ito H."/>
            <person name="Hahn J.H."/>
            <person name="Kim H.-I."/>
            <person name="Eun M.-Y."/>
            <person name="Yano M."/>
            <person name="Jiang J."/>
            <person name="Gojobori T."/>
        </authorList>
    </citation>
    <scope>NUCLEOTIDE SEQUENCE [LARGE SCALE GENOMIC DNA]</scope>
    <source>
        <strain>cv. Nipponbare</strain>
    </source>
</reference>
<reference key="2">
    <citation type="journal article" date="2005" name="Nature">
        <title>The map-based sequence of the rice genome.</title>
        <authorList>
            <consortium name="International rice genome sequencing project (IRGSP)"/>
        </authorList>
    </citation>
    <scope>NUCLEOTIDE SEQUENCE [LARGE SCALE GENOMIC DNA]</scope>
    <source>
        <strain>cv. Nipponbare</strain>
    </source>
</reference>
<reference key="3">
    <citation type="journal article" date="2013" name="Rice">
        <title>Improvement of the Oryza sativa Nipponbare reference genome using next generation sequence and optical map data.</title>
        <authorList>
            <person name="Kawahara Y."/>
            <person name="de la Bastide M."/>
            <person name="Hamilton J.P."/>
            <person name="Kanamori H."/>
            <person name="McCombie W.R."/>
            <person name="Ouyang S."/>
            <person name="Schwartz D.C."/>
            <person name="Tanaka T."/>
            <person name="Wu J."/>
            <person name="Zhou S."/>
            <person name="Childs K.L."/>
            <person name="Davidson R.M."/>
            <person name="Lin H."/>
            <person name="Quesada-Ocampo L."/>
            <person name="Vaillancourt B."/>
            <person name="Sakai H."/>
            <person name="Lee S.S."/>
            <person name="Kim J."/>
            <person name="Numa H."/>
            <person name="Itoh T."/>
            <person name="Buell C.R."/>
            <person name="Matsumoto T."/>
        </authorList>
    </citation>
    <scope>GENOME REANNOTATION</scope>
    <source>
        <strain>cv. Nipponbare</strain>
    </source>
</reference>
<reference key="4">
    <citation type="journal article" date="2005" name="PLoS Biol.">
        <title>The genomes of Oryza sativa: a history of duplications.</title>
        <authorList>
            <person name="Yu J."/>
            <person name="Wang J."/>
            <person name="Lin W."/>
            <person name="Li S."/>
            <person name="Li H."/>
            <person name="Zhou J."/>
            <person name="Ni P."/>
            <person name="Dong W."/>
            <person name="Hu S."/>
            <person name="Zeng C."/>
            <person name="Zhang J."/>
            <person name="Zhang Y."/>
            <person name="Li R."/>
            <person name="Xu Z."/>
            <person name="Li S."/>
            <person name="Li X."/>
            <person name="Zheng H."/>
            <person name="Cong L."/>
            <person name="Lin L."/>
            <person name="Yin J."/>
            <person name="Geng J."/>
            <person name="Li G."/>
            <person name="Shi J."/>
            <person name="Liu J."/>
            <person name="Lv H."/>
            <person name="Li J."/>
            <person name="Wang J."/>
            <person name="Deng Y."/>
            <person name="Ran L."/>
            <person name="Shi X."/>
            <person name="Wang X."/>
            <person name="Wu Q."/>
            <person name="Li C."/>
            <person name="Ren X."/>
            <person name="Wang J."/>
            <person name="Wang X."/>
            <person name="Li D."/>
            <person name="Liu D."/>
            <person name="Zhang X."/>
            <person name="Ji Z."/>
            <person name="Zhao W."/>
            <person name="Sun Y."/>
            <person name="Zhang Z."/>
            <person name="Bao J."/>
            <person name="Han Y."/>
            <person name="Dong L."/>
            <person name="Ji J."/>
            <person name="Chen P."/>
            <person name="Wu S."/>
            <person name="Liu J."/>
            <person name="Xiao Y."/>
            <person name="Bu D."/>
            <person name="Tan J."/>
            <person name="Yang L."/>
            <person name="Ye C."/>
            <person name="Zhang J."/>
            <person name="Xu J."/>
            <person name="Zhou Y."/>
            <person name="Yu Y."/>
            <person name="Zhang B."/>
            <person name="Zhuang S."/>
            <person name="Wei H."/>
            <person name="Liu B."/>
            <person name="Lei M."/>
            <person name="Yu H."/>
            <person name="Li Y."/>
            <person name="Xu H."/>
            <person name="Wei S."/>
            <person name="He X."/>
            <person name="Fang L."/>
            <person name="Zhang Z."/>
            <person name="Zhang Y."/>
            <person name="Huang X."/>
            <person name="Su Z."/>
            <person name="Tong W."/>
            <person name="Li J."/>
            <person name="Tong Z."/>
            <person name="Li S."/>
            <person name="Ye J."/>
            <person name="Wang L."/>
            <person name="Fang L."/>
            <person name="Lei T."/>
            <person name="Chen C.-S."/>
            <person name="Chen H.-C."/>
            <person name="Xu Z."/>
            <person name="Li H."/>
            <person name="Huang H."/>
            <person name="Zhang F."/>
            <person name="Xu H."/>
            <person name="Li N."/>
            <person name="Zhao C."/>
            <person name="Li S."/>
            <person name="Dong L."/>
            <person name="Huang Y."/>
            <person name="Li L."/>
            <person name="Xi Y."/>
            <person name="Qi Q."/>
            <person name="Li W."/>
            <person name="Zhang B."/>
            <person name="Hu W."/>
            <person name="Zhang Y."/>
            <person name="Tian X."/>
            <person name="Jiao Y."/>
            <person name="Liang X."/>
            <person name="Jin J."/>
            <person name="Gao L."/>
            <person name="Zheng W."/>
            <person name="Hao B."/>
            <person name="Liu S.-M."/>
            <person name="Wang W."/>
            <person name="Yuan L."/>
            <person name="Cao M."/>
            <person name="McDermott J."/>
            <person name="Samudrala R."/>
            <person name="Wang J."/>
            <person name="Wong G.K.-S."/>
            <person name="Yang H."/>
        </authorList>
    </citation>
    <scope>NUCLEOTIDE SEQUENCE [LARGE SCALE GENOMIC DNA]</scope>
    <source>
        <strain>cv. Nipponbare</strain>
    </source>
</reference>
<reference key="5">
    <citation type="journal article" date="2007" name="BMC Plant Biol.">
        <title>Genome-wide identification and analyses of the rice calmodulin and related potential calcium sensor proteins.</title>
        <authorList>
            <person name="Boonburapong B."/>
            <person name="Buaboocha T."/>
        </authorList>
    </citation>
    <scope>GENE FAMILY</scope>
    <scope>NOMENCLATURE</scope>
</reference>